<protein>
    <recommendedName>
        <fullName evidence="1">Ribosomal RNA large subunit methyltransferase G</fullName>
        <ecNumber evidence="1">2.1.1.174</ecNumber>
    </recommendedName>
    <alternativeName>
        <fullName evidence="1">23S rRNA m2G1835 methyltransferase</fullName>
    </alternativeName>
    <alternativeName>
        <fullName evidence="1">rRNA (guanine-N(2)-)-methyltransferase RlmG</fullName>
    </alternativeName>
</protein>
<organism>
    <name type="scientific">Shewanella frigidimarina (strain NCIMB 400)</name>
    <dbReference type="NCBI Taxonomy" id="318167"/>
    <lineage>
        <taxon>Bacteria</taxon>
        <taxon>Pseudomonadati</taxon>
        <taxon>Pseudomonadota</taxon>
        <taxon>Gammaproteobacteria</taxon>
        <taxon>Alteromonadales</taxon>
        <taxon>Shewanellaceae</taxon>
        <taxon>Shewanella</taxon>
    </lineage>
</organism>
<feature type="chain" id="PRO_0000366509" description="Ribosomal RNA large subunit methyltransferase G">
    <location>
        <begin position="1"/>
        <end position="392"/>
    </location>
</feature>
<sequence length="392" mass="43460">MTTQFACSGIELELFRYPSQQASNLQAWDAADEHLVKYLIDTEITATTTAILNDNFGALTCALTMQYPHSELLVETDAKTSLLGYQQNLLHNKLASTNIHWLNSRETLPQNIQLVLMKLPKNLHYFGQQLARLSTVLPAGTQILIGAKAKSINPALLASIEKNLGPASASLAWKKTRVISCISDGKKRSLAKAVSWNVDELKLTISNLANVFAANKLDIGARIMLDNMPKGEFKHIIDLGCGNGILGLHAKQCYPNAQIHFVDDSDMAIASAKHNWQANELDTPSQDLQSQDPQTEQMPQAFFHWDDCLSNLPADVEPDLVICNPPFHQGEAITDHIAWQMFVDAHKRLKKGGLLHIVGNRHLAYHVKINRIFKNCTTVASNGKFVILQAIK</sequence>
<comment type="function">
    <text evidence="1">Specifically methylates the guanine in position 1835 (m2G1835) of 23S rRNA.</text>
</comment>
<comment type="catalytic activity">
    <reaction evidence="1">
        <text>guanosine(1835) in 23S rRNA + S-adenosyl-L-methionine = N(2)-methylguanosine(1835) in 23S rRNA + S-adenosyl-L-homocysteine + H(+)</text>
        <dbReference type="Rhea" id="RHEA:42744"/>
        <dbReference type="Rhea" id="RHEA-COMP:10217"/>
        <dbReference type="Rhea" id="RHEA-COMP:10218"/>
        <dbReference type="ChEBI" id="CHEBI:15378"/>
        <dbReference type="ChEBI" id="CHEBI:57856"/>
        <dbReference type="ChEBI" id="CHEBI:59789"/>
        <dbReference type="ChEBI" id="CHEBI:74269"/>
        <dbReference type="ChEBI" id="CHEBI:74481"/>
        <dbReference type="EC" id="2.1.1.174"/>
    </reaction>
</comment>
<comment type="subcellular location">
    <subcellularLocation>
        <location evidence="1">Cytoplasm</location>
    </subcellularLocation>
</comment>
<comment type="similarity">
    <text evidence="1">Belongs to the methyltransferase superfamily. RlmG family.</text>
</comment>
<accession>Q07YH6</accession>
<dbReference type="EC" id="2.1.1.174" evidence="1"/>
<dbReference type="EMBL" id="CP000447">
    <property type="protein sequence ID" value="ABI72938.1"/>
    <property type="molecule type" value="Genomic_DNA"/>
</dbReference>
<dbReference type="RefSeq" id="WP_011638544.1">
    <property type="nucleotide sequence ID" value="NC_008345.1"/>
</dbReference>
<dbReference type="SMR" id="Q07YH6"/>
<dbReference type="STRING" id="318167.Sfri_3101"/>
<dbReference type="DNASU" id="4280004"/>
<dbReference type="KEGG" id="sfr:Sfri_3101"/>
<dbReference type="eggNOG" id="COG2813">
    <property type="taxonomic scope" value="Bacteria"/>
</dbReference>
<dbReference type="HOGENOM" id="CLU_040288_4_0_6"/>
<dbReference type="OrthoDB" id="29650at2"/>
<dbReference type="Proteomes" id="UP000000684">
    <property type="component" value="Chromosome"/>
</dbReference>
<dbReference type="GO" id="GO:0005737">
    <property type="term" value="C:cytoplasm"/>
    <property type="evidence" value="ECO:0007669"/>
    <property type="project" value="UniProtKB-SubCell"/>
</dbReference>
<dbReference type="GO" id="GO:0052916">
    <property type="term" value="F:23S rRNA (guanine(1835)-N(2))-methyltransferase activity"/>
    <property type="evidence" value="ECO:0007669"/>
    <property type="project" value="UniProtKB-EC"/>
</dbReference>
<dbReference type="GO" id="GO:0003676">
    <property type="term" value="F:nucleic acid binding"/>
    <property type="evidence" value="ECO:0007669"/>
    <property type="project" value="InterPro"/>
</dbReference>
<dbReference type="CDD" id="cd02440">
    <property type="entry name" value="AdoMet_MTases"/>
    <property type="match status" value="1"/>
</dbReference>
<dbReference type="Gene3D" id="3.40.50.150">
    <property type="entry name" value="Vaccinia Virus protein VP39"/>
    <property type="match status" value="2"/>
</dbReference>
<dbReference type="HAMAP" id="MF_01859">
    <property type="entry name" value="23SrRNA_methyltr_G"/>
    <property type="match status" value="1"/>
</dbReference>
<dbReference type="InterPro" id="IPR002052">
    <property type="entry name" value="DNA_methylase_N6_adenine_CS"/>
</dbReference>
<dbReference type="InterPro" id="IPR017237">
    <property type="entry name" value="rRNA_m2G-MeTrfase_RlmG"/>
</dbReference>
<dbReference type="InterPro" id="IPR046977">
    <property type="entry name" value="RsmC/RlmG"/>
</dbReference>
<dbReference type="InterPro" id="IPR029063">
    <property type="entry name" value="SAM-dependent_MTases_sf"/>
</dbReference>
<dbReference type="InterPro" id="IPR007848">
    <property type="entry name" value="Small_mtfrase_dom"/>
</dbReference>
<dbReference type="PANTHER" id="PTHR47816:SF5">
    <property type="entry name" value="RIBOSOMAL RNA LARGE SUBUNIT METHYLTRANSFERASE G"/>
    <property type="match status" value="1"/>
</dbReference>
<dbReference type="PANTHER" id="PTHR47816">
    <property type="entry name" value="RIBOSOMAL RNA SMALL SUBUNIT METHYLTRANSFERASE C"/>
    <property type="match status" value="1"/>
</dbReference>
<dbReference type="Pfam" id="PF05175">
    <property type="entry name" value="MTS"/>
    <property type="match status" value="1"/>
</dbReference>
<dbReference type="PIRSF" id="PIRSF037565">
    <property type="entry name" value="RRNA_m2G_Mtase_RsmD_prd"/>
    <property type="match status" value="1"/>
</dbReference>
<dbReference type="SUPFAM" id="SSF53335">
    <property type="entry name" value="S-adenosyl-L-methionine-dependent methyltransferases"/>
    <property type="match status" value="1"/>
</dbReference>
<reference key="1">
    <citation type="submission" date="2006-08" db="EMBL/GenBank/DDBJ databases">
        <title>Complete sequence of Shewanella frigidimarina NCIMB 400.</title>
        <authorList>
            <consortium name="US DOE Joint Genome Institute"/>
            <person name="Copeland A."/>
            <person name="Lucas S."/>
            <person name="Lapidus A."/>
            <person name="Barry K."/>
            <person name="Detter J.C."/>
            <person name="Glavina del Rio T."/>
            <person name="Hammon N."/>
            <person name="Israni S."/>
            <person name="Dalin E."/>
            <person name="Tice H."/>
            <person name="Pitluck S."/>
            <person name="Fredrickson J.K."/>
            <person name="Kolker E."/>
            <person name="McCuel L.A."/>
            <person name="DiChristina T."/>
            <person name="Nealson K.H."/>
            <person name="Newman D."/>
            <person name="Tiedje J.M."/>
            <person name="Zhou J."/>
            <person name="Romine M.F."/>
            <person name="Culley D.E."/>
            <person name="Serres M."/>
            <person name="Chertkov O."/>
            <person name="Brettin T."/>
            <person name="Bruce D."/>
            <person name="Han C."/>
            <person name="Tapia R."/>
            <person name="Gilna P."/>
            <person name="Schmutz J."/>
            <person name="Larimer F."/>
            <person name="Land M."/>
            <person name="Hauser L."/>
            <person name="Kyrpides N."/>
            <person name="Mikhailova N."/>
            <person name="Richardson P."/>
        </authorList>
    </citation>
    <scope>NUCLEOTIDE SEQUENCE [LARGE SCALE GENOMIC DNA]</scope>
    <source>
        <strain>NCIMB 400</strain>
    </source>
</reference>
<keyword id="KW-0963">Cytoplasm</keyword>
<keyword id="KW-0489">Methyltransferase</keyword>
<keyword id="KW-1185">Reference proteome</keyword>
<keyword id="KW-0698">rRNA processing</keyword>
<keyword id="KW-0949">S-adenosyl-L-methionine</keyword>
<keyword id="KW-0808">Transferase</keyword>
<proteinExistence type="inferred from homology"/>
<gene>
    <name evidence="1" type="primary">rlmG</name>
    <name type="ordered locus">Sfri_3101</name>
</gene>
<evidence type="ECO:0000255" key="1">
    <source>
        <dbReference type="HAMAP-Rule" id="MF_01859"/>
    </source>
</evidence>
<name>RLMG_SHEFN</name>